<comment type="function">
    <text evidence="1">DNA-dependent RNA polymerase catalyzes the transcription of DNA into RNA using the four ribonucleoside triphosphates as substrates.</text>
</comment>
<comment type="catalytic activity">
    <reaction evidence="1">
        <text>RNA(n) + a ribonucleoside 5'-triphosphate = RNA(n+1) + diphosphate</text>
        <dbReference type="Rhea" id="RHEA:21248"/>
        <dbReference type="Rhea" id="RHEA-COMP:14527"/>
        <dbReference type="Rhea" id="RHEA-COMP:17342"/>
        <dbReference type="ChEBI" id="CHEBI:33019"/>
        <dbReference type="ChEBI" id="CHEBI:61557"/>
        <dbReference type="ChEBI" id="CHEBI:140395"/>
        <dbReference type="EC" id="2.7.7.6"/>
    </reaction>
</comment>
<comment type="cofactor">
    <cofactor evidence="1">
        <name>Mg(2+)</name>
        <dbReference type="ChEBI" id="CHEBI:18420"/>
    </cofactor>
    <text evidence="1">Binds 1 Mg(2+) ion per subunit.</text>
</comment>
<comment type="cofactor">
    <cofactor evidence="1">
        <name>Zn(2+)</name>
        <dbReference type="ChEBI" id="CHEBI:29105"/>
    </cofactor>
    <text evidence="1">Binds 2 Zn(2+) ions per subunit.</text>
</comment>
<comment type="subunit">
    <text evidence="1">The RNAP catalytic core consists of 2 alpha, 1 beta, 1 beta' and 1 omega subunit. When a sigma factor is associated with the core the holoenzyme is formed, which can initiate transcription.</text>
</comment>
<comment type="similarity">
    <text evidence="1">Belongs to the RNA polymerase beta' chain family.</text>
</comment>
<gene>
    <name evidence="1" type="primary">rpoC</name>
    <name type="ordered locus">Smlt0899</name>
</gene>
<dbReference type="EC" id="2.7.7.6" evidence="1"/>
<dbReference type="EMBL" id="AM743169">
    <property type="protein sequence ID" value="CAQ44469.1"/>
    <property type="molecule type" value="Genomic_DNA"/>
</dbReference>
<dbReference type="RefSeq" id="WP_005412340.1">
    <property type="nucleotide sequence ID" value="NC_010943.1"/>
</dbReference>
<dbReference type="SMR" id="B2FQ39"/>
<dbReference type="EnsemblBacteria" id="CAQ44469">
    <property type="protein sequence ID" value="CAQ44469"/>
    <property type="gene ID" value="Smlt0899"/>
</dbReference>
<dbReference type="GeneID" id="93831930"/>
<dbReference type="KEGG" id="sml:Smlt0899"/>
<dbReference type="eggNOG" id="COG0086">
    <property type="taxonomic scope" value="Bacteria"/>
</dbReference>
<dbReference type="HOGENOM" id="CLU_000524_3_1_6"/>
<dbReference type="Proteomes" id="UP000008840">
    <property type="component" value="Chromosome"/>
</dbReference>
<dbReference type="GO" id="GO:0000428">
    <property type="term" value="C:DNA-directed RNA polymerase complex"/>
    <property type="evidence" value="ECO:0007669"/>
    <property type="project" value="UniProtKB-KW"/>
</dbReference>
<dbReference type="GO" id="GO:0003677">
    <property type="term" value="F:DNA binding"/>
    <property type="evidence" value="ECO:0007669"/>
    <property type="project" value="UniProtKB-UniRule"/>
</dbReference>
<dbReference type="GO" id="GO:0003899">
    <property type="term" value="F:DNA-directed RNA polymerase activity"/>
    <property type="evidence" value="ECO:0007669"/>
    <property type="project" value="UniProtKB-UniRule"/>
</dbReference>
<dbReference type="GO" id="GO:0000287">
    <property type="term" value="F:magnesium ion binding"/>
    <property type="evidence" value="ECO:0007669"/>
    <property type="project" value="UniProtKB-UniRule"/>
</dbReference>
<dbReference type="GO" id="GO:0008270">
    <property type="term" value="F:zinc ion binding"/>
    <property type="evidence" value="ECO:0007669"/>
    <property type="project" value="UniProtKB-UniRule"/>
</dbReference>
<dbReference type="GO" id="GO:0006351">
    <property type="term" value="P:DNA-templated transcription"/>
    <property type="evidence" value="ECO:0007669"/>
    <property type="project" value="UniProtKB-UniRule"/>
</dbReference>
<dbReference type="CDD" id="cd02655">
    <property type="entry name" value="RNAP_beta'_C"/>
    <property type="match status" value="1"/>
</dbReference>
<dbReference type="CDD" id="cd01609">
    <property type="entry name" value="RNAP_beta'_N"/>
    <property type="match status" value="1"/>
</dbReference>
<dbReference type="FunFam" id="1.10.132.30:FF:000003">
    <property type="entry name" value="DNA-directed RNA polymerase subunit beta"/>
    <property type="match status" value="1"/>
</dbReference>
<dbReference type="FunFam" id="1.10.150.390:FF:000002">
    <property type="entry name" value="DNA-directed RNA polymerase subunit beta"/>
    <property type="match status" value="1"/>
</dbReference>
<dbReference type="Gene3D" id="1.10.132.30">
    <property type="match status" value="1"/>
</dbReference>
<dbReference type="Gene3D" id="1.10.150.390">
    <property type="match status" value="1"/>
</dbReference>
<dbReference type="Gene3D" id="1.10.1790.20">
    <property type="match status" value="1"/>
</dbReference>
<dbReference type="Gene3D" id="1.10.40.90">
    <property type="match status" value="1"/>
</dbReference>
<dbReference type="Gene3D" id="2.40.40.20">
    <property type="match status" value="1"/>
</dbReference>
<dbReference type="Gene3D" id="2.40.50.100">
    <property type="match status" value="3"/>
</dbReference>
<dbReference type="Gene3D" id="4.10.860.120">
    <property type="entry name" value="RNA polymerase II, clamp domain"/>
    <property type="match status" value="1"/>
</dbReference>
<dbReference type="Gene3D" id="1.10.274.100">
    <property type="entry name" value="RNA polymerase Rpb1, domain 3"/>
    <property type="match status" value="1"/>
</dbReference>
<dbReference type="HAMAP" id="MF_01322">
    <property type="entry name" value="RNApol_bact_RpoC"/>
    <property type="match status" value="1"/>
</dbReference>
<dbReference type="InterPro" id="IPR045867">
    <property type="entry name" value="DNA-dir_RpoC_beta_prime"/>
</dbReference>
<dbReference type="InterPro" id="IPR012754">
    <property type="entry name" value="DNA-dir_RpoC_beta_prime_bact"/>
</dbReference>
<dbReference type="InterPro" id="IPR000722">
    <property type="entry name" value="RNA_pol_asu"/>
</dbReference>
<dbReference type="InterPro" id="IPR006592">
    <property type="entry name" value="RNA_pol_N"/>
</dbReference>
<dbReference type="InterPro" id="IPR007080">
    <property type="entry name" value="RNA_pol_Rpb1_1"/>
</dbReference>
<dbReference type="InterPro" id="IPR007066">
    <property type="entry name" value="RNA_pol_Rpb1_3"/>
</dbReference>
<dbReference type="InterPro" id="IPR042102">
    <property type="entry name" value="RNA_pol_Rpb1_3_sf"/>
</dbReference>
<dbReference type="InterPro" id="IPR007083">
    <property type="entry name" value="RNA_pol_Rpb1_4"/>
</dbReference>
<dbReference type="InterPro" id="IPR007081">
    <property type="entry name" value="RNA_pol_Rpb1_5"/>
</dbReference>
<dbReference type="InterPro" id="IPR044893">
    <property type="entry name" value="RNA_pol_Rpb1_clamp_domain"/>
</dbReference>
<dbReference type="InterPro" id="IPR038120">
    <property type="entry name" value="Rpb1_funnel_sf"/>
</dbReference>
<dbReference type="NCBIfam" id="TIGR02386">
    <property type="entry name" value="rpoC_TIGR"/>
    <property type="match status" value="1"/>
</dbReference>
<dbReference type="PANTHER" id="PTHR19376">
    <property type="entry name" value="DNA-DIRECTED RNA POLYMERASE"/>
    <property type="match status" value="1"/>
</dbReference>
<dbReference type="PANTHER" id="PTHR19376:SF54">
    <property type="entry name" value="DNA-DIRECTED RNA POLYMERASE SUBUNIT BETA"/>
    <property type="match status" value="1"/>
</dbReference>
<dbReference type="Pfam" id="PF04997">
    <property type="entry name" value="RNA_pol_Rpb1_1"/>
    <property type="match status" value="1"/>
</dbReference>
<dbReference type="Pfam" id="PF00623">
    <property type="entry name" value="RNA_pol_Rpb1_2"/>
    <property type="match status" value="2"/>
</dbReference>
<dbReference type="Pfam" id="PF04983">
    <property type="entry name" value="RNA_pol_Rpb1_3"/>
    <property type="match status" value="1"/>
</dbReference>
<dbReference type="Pfam" id="PF05000">
    <property type="entry name" value="RNA_pol_Rpb1_4"/>
    <property type="match status" value="1"/>
</dbReference>
<dbReference type="Pfam" id="PF04998">
    <property type="entry name" value="RNA_pol_Rpb1_5"/>
    <property type="match status" value="1"/>
</dbReference>
<dbReference type="SMART" id="SM00663">
    <property type="entry name" value="RPOLA_N"/>
    <property type="match status" value="1"/>
</dbReference>
<dbReference type="SUPFAM" id="SSF64484">
    <property type="entry name" value="beta and beta-prime subunits of DNA dependent RNA-polymerase"/>
    <property type="match status" value="1"/>
</dbReference>
<sequence length="1406" mass="155286">MKDLLNLFNQQRQTLDFDAIKIALASPDLIRSWSFGEVKKPETINYRTFKPERDGLFCAAIFGPVKDYECLCGKYKRMKHRGVVCEKCGTEVTLAKVRRERMGHIDLASPVAHIWFLKSLPSRIGLMLDMTLRDIERVLYFEAYVVTEPGLTALERRQLLTEEQYLQARQEHGDDFDAAMGAEAVYELLRTIDLQSEMTRLREEIAATGSETKLKRLTKRIKLIEAFLESGNRPEWMVMTVLPVLPPDLRPLVPLDGGRFATSDLNDLYRRVINRNNRLRRLLELSAPDIIVRNEKRMLQESVDALLDNGRRGRAITGTNKRPLKSLADMIKGKQGRFRQNLLGKRVDYSGRSVIVVGPYLRLHQCGLPKKMALELFKPFVFAKLQRRGLATTIKAAKKLVEREEAEVWDILEEVIREHPVMLNRAPTLHRLGIQAFEPVLIEGKAIQLHPLVCTAFNADFDGDQMAVHVPLSLEAQLEARALMMSTNNILSPANGEPIIVPSQDVVLGLYYMTRSLENKKGEGMAFANIAEVKRAYDNRVVELHARVKVRITEVVTDEDGNKQNKTSIVDTTIGRALLAEILPEGLPFALANTELTKKNISRLINSSYRQLGLKDTVVFADKLMYTGFAYATRAGVSIGIDDMLIPDEKKGILTEAEAEVLEIQEQYQSGLVTAGERYNKVVDIWSRTNERIAKAMMDTIGTEKVVNAKGETIDQKSMNSLYIMADSGARGSQAQIRQLAGMRGLMARPDGSIIETPIKANFREGLNVQEYFNSTHGARKGLADTALKTANSGYLTRRLVDVAQDVVITEVDCGTTEGLIMTPIVEGGDVVEPLKDRVLGRVVAEDVFLPGNDEDPIVTRNTLLDEAWVAKLEDAGVQTIKVRSTISCESAFGVCSRCYGRDLARGHLVNIGEAVGVIAAQSIGEPGTQLTMRTFHIGGAASRAAAVDNITVKTTGSVKFSNLKSVEHANGSLVAVSRSGEISVLDAHGRERERYKLPYGATITSKDGDAIKAGQTVANWDPHNHPIVSEVAGFIRFIDFVDGITVIEKTDELTGLASREITDPKRRGTQAKDLRPIVRIVDAKGNDLSIPGTDLPAQYLLPPRSIVNLQDGAAVGVGDVVAKIPQEASKTRDITGGLPRVADLFEARKPKDPAVLAERSGIISFGKDTKGKQRLIIKDTDGSEHEELIPKYRQVIVFEGEHVTKGETIVDGEPSPQDILRLLGVEPLAAYLVKEIQDVYRLQGVKINDKHIEVITRQMLRKVEITDQGSSKFLNGEQVERQRVIEENARLAARNELPAHFDPVLLGITKASLATESFISAASFQETTRVLTEAAVRGTSDNLRGLKENVIVGRLIPAGTGLAYHSNRRRGASGLTESEMQTLAGTPAAVEAPVVEAEAEQASED</sequence>
<organism>
    <name type="scientific">Stenotrophomonas maltophilia (strain K279a)</name>
    <dbReference type="NCBI Taxonomy" id="522373"/>
    <lineage>
        <taxon>Bacteria</taxon>
        <taxon>Pseudomonadati</taxon>
        <taxon>Pseudomonadota</taxon>
        <taxon>Gammaproteobacteria</taxon>
        <taxon>Lysobacterales</taxon>
        <taxon>Lysobacteraceae</taxon>
        <taxon>Stenotrophomonas</taxon>
        <taxon>Stenotrophomonas maltophilia group</taxon>
    </lineage>
</organism>
<reference key="1">
    <citation type="journal article" date="2008" name="Genome Biol.">
        <title>The complete genome, comparative and functional analysis of Stenotrophomonas maltophilia reveals an organism heavily shielded by drug resistance determinants.</title>
        <authorList>
            <person name="Crossman L.C."/>
            <person name="Gould V.C."/>
            <person name="Dow J.M."/>
            <person name="Vernikos G.S."/>
            <person name="Okazaki A."/>
            <person name="Sebaihia M."/>
            <person name="Saunders D."/>
            <person name="Arrowsmith C."/>
            <person name="Carver T."/>
            <person name="Peters N."/>
            <person name="Adlem E."/>
            <person name="Kerhornou A."/>
            <person name="Lord A."/>
            <person name="Murphy L."/>
            <person name="Seeger K."/>
            <person name="Squares R."/>
            <person name="Rutter S."/>
            <person name="Quail M.A."/>
            <person name="Rajandream M.A."/>
            <person name="Harris D."/>
            <person name="Churcher C."/>
            <person name="Bentley S.D."/>
            <person name="Parkhill J."/>
            <person name="Thomson N.R."/>
            <person name="Avison M.B."/>
        </authorList>
    </citation>
    <scope>NUCLEOTIDE SEQUENCE [LARGE SCALE GENOMIC DNA]</scope>
    <source>
        <strain>K279a</strain>
    </source>
</reference>
<keyword id="KW-0240">DNA-directed RNA polymerase</keyword>
<keyword id="KW-0460">Magnesium</keyword>
<keyword id="KW-0479">Metal-binding</keyword>
<keyword id="KW-0548">Nucleotidyltransferase</keyword>
<keyword id="KW-1185">Reference proteome</keyword>
<keyword id="KW-0804">Transcription</keyword>
<keyword id="KW-0808">Transferase</keyword>
<keyword id="KW-0862">Zinc</keyword>
<proteinExistence type="inferred from homology"/>
<accession>B2FQ39</accession>
<feature type="chain" id="PRO_0000353442" description="DNA-directed RNA polymerase subunit beta'">
    <location>
        <begin position="1"/>
        <end position="1406"/>
    </location>
</feature>
<feature type="binding site" evidence="1">
    <location>
        <position position="70"/>
    </location>
    <ligand>
        <name>Zn(2+)</name>
        <dbReference type="ChEBI" id="CHEBI:29105"/>
        <label>1</label>
    </ligand>
</feature>
<feature type="binding site" evidence="1">
    <location>
        <position position="72"/>
    </location>
    <ligand>
        <name>Zn(2+)</name>
        <dbReference type="ChEBI" id="CHEBI:29105"/>
        <label>1</label>
    </ligand>
</feature>
<feature type="binding site" evidence="1">
    <location>
        <position position="85"/>
    </location>
    <ligand>
        <name>Zn(2+)</name>
        <dbReference type="ChEBI" id="CHEBI:29105"/>
        <label>1</label>
    </ligand>
</feature>
<feature type="binding site" evidence="1">
    <location>
        <position position="88"/>
    </location>
    <ligand>
        <name>Zn(2+)</name>
        <dbReference type="ChEBI" id="CHEBI:29105"/>
        <label>1</label>
    </ligand>
</feature>
<feature type="binding site" evidence="1">
    <location>
        <position position="460"/>
    </location>
    <ligand>
        <name>Mg(2+)</name>
        <dbReference type="ChEBI" id="CHEBI:18420"/>
    </ligand>
</feature>
<feature type="binding site" evidence="1">
    <location>
        <position position="462"/>
    </location>
    <ligand>
        <name>Mg(2+)</name>
        <dbReference type="ChEBI" id="CHEBI:18420"/>
    </ligand>
</feature>
<feature type="binding site" evidence="1">
    <location>
        <position position="464"/>
    </location>
    <ligand>
        <name>Mg(2+)</name>
        <dbReference type="ChEBI" id="CHEBI:18420"/>
    </ligand>
</feature>
<feature type="binding site" evidence="1">
    <location>
        <position position="814"/>
    </location>
    <ligand>
        <name>Zn(2+)</name>
        <dbReference type="ChEBI" id="CHEBI:29105"/>
        <label>2</label>
    </ligand>
</feature>
<feature type="binding site" evidence="1">
    <location>
        <position position="889"/>
    </location>
    <ligand>
        <name>Zn(2+)</name>
        <dbReference type="ChEBI" id="CHEBI:29105"/>
        <label>2</label>
    </ligand>
</feature>
<feature type="binding site" evidence="1">
    <location>
        <position position="896"/>
    </location>
    <ligand>
        <name>Zn(2+)</name>
        <dbReference type="ChEBI" id="CHEBI:29105"/>
        <label>2</label>
    </ligand>
</feature>
<feature type="binding site" evidence="1">
    <location>
        <position position="899"/>
    </location>
    <ligand>
        <name>Zn(2+)</name>
        <dbReference type="ChEBI" id="CHEBI:29105"/>
        <label>2</label>
    </ligand>
</feature>
<evidence type="ECO:0000255" key="1">
    <source>
        <dbReference type="HAMAP-Rule" id="MF_01322"/>
    </source>
</evidence>
<protein>
    <recommendedName>
        <fullName evidence="1">DNA-directed RNA polymerase subunit beta'</fullName>
        <shortName evidence="1">RNAP subunit beta'</shortName>
        <ecNumber evidence="1">2.7.7.6</ecNumber>
    </recommendedName>
    <alternativeName>
        <fullName evidence="1">RNA polymerase subunit beta'</fullName>
    </alternativeName>
    <alternativeName>
        <fullName evidence="1">Transcriptase subunit beta'</fullName>
    </alternativeName>
</protein>
<name>RPOC_STRMK</name>